<keyword id="KW-0025">Alternative splicing</keyword>
<keyword id="KW-0966">Cell projection</keyword>
<keyword id="KW-0969">Cilium</keyword>
<keyword id="KW-0175">Coiled coil</keyword>
<keyword id="KW-0963">Cytoplasm</keyword>
<keyword id="KW-0221">Differentiation</keyword>
<keyword id="KW-0225">Disease variant</keyword>
<keyword id="KW-0282">Flagellum</keyword>
<keyword id="KW-0333">Golgi apparatus</keyword>
<keyword id="KW-1267">Proteomics identification</keyword>
<keyword id="KW-1185">Reference proteome</keyword>
<keyword id="KW-0744">Spermatogenesis</keyword>
<accession>Q9C093</accession>
<accession>Q2TAC9</accession>
<accession>Q96LL6</accession>
<accession>Q9H5C7</accession>
<accession>Q9H5Q7</accession>
<feature type="chain" id="PRO_0000299029" description="Sperm flagellar protein 2">
    <location>
        <begin position="1"/>
        <end position="1822"/>
    </location>
</feature>
<feature type="domain" description="Calponin-homology (CH)" evidence="3">
    <location>
        <begin position="1"/>
        <end position="105"/>
    </location>
</feature>
<feature type="region of interest" description="Disordered" evidence="4">
    <location>
        <begin position="896"/>
        <end position="1004"/>
    </location>
</feature>
<feature type="region of interest" description="Disordered" evidence="4">
    <location>
        <begin position="1278"/>
        <end position="1327"/>
    </location>
</feature>
<feature type="region of interest" description="Interaction with IFT20" evidence="7">
    <location>
        <begin position="1324"/>
        <end position="1676"/>
    </location>
</feature>
<feature type="region of interest" description="Disordered" evidence="4">
    <location>
        <begin position="1664"/>
        <end position="1718"/>
    </location>
</feature>
<feature type="region of interest" description="Disordered" evidence="4">
    <location>
        <begin position="1803"/>
        <end position="1822"/>
    </location>
</feature>
<feature type="coiled-coil region" evidence="2">
    <location>
        <begin position="227"/>
        <end position="260"/>
    </location>
</feature>
<feature type="coiled-coil region" evidence="2">
    <location>
        <begin position="321"/>
        <end position="396"/>
    </location>
</feature>
<feature type="coiled-coil region" evidence="2">
    <location>
        <begin position="732"/>
        <end position="758"/>
    </location>
</feature>
<feature type="coiled-coil region" evidence="2">
    <location>
        <begin position="871"/>
        <end position="909"/>
    </location>
</feature>
<feature type="coiled-coil region" evidence="2">
    <location>
        <begin position="1686"/>
        <end position="1712"/>
    </location>
</feature>
<feature type="compositionally biased region" description="Pro residues" evidence="4">
    <location>
        <begin position="911"/>
        <end position="920"/>
    </location>
</feature>
<feature type="compositionally biased region" description="Basic and acidic residues" evidence="4">
    <location>
        <begin position="921"/>
        <end position="930"/>
    </location>
</feature>
<feature type="compositionally biased region" description="Basic and acidic residues" evidence="4">
    <location>
        <begin position="949"/>
        <end position="968"/>
    </location>
</feature>
<feature type="compositionally biased region" description="Low complexity" evidence="4">
    <location>
        <begin position="975"/>
        <end position="987"/>
    </location>
</feature>
<feature type="compositionally biased region" description="Basic and acidic residues" evidence="4">
    <location>
        <begin position="1278"/>
        <end position="1292"/>
    </location>
</feature>
<feature type="compositionally biased region" description="Basic and acidic residues" evidence="4">
    <location>
        <begin position="1303"/>
        <end position="1314"/>
    </location>
</feature>
<feature type="compositionally biased region" description="Basic and acidic residues" evidence="4">
    <location>
        <begin position="1688"/>
        <end position="1708"/>
    </location>
</feature>
<feature type="splice variant" id="VSP_027521" description="In isoform 4." evidence="12">
    <original>MSEILCQWLNKELKVSRTVSPKSFAKAFSSGYLLGEVLHKFELQDDFSEFLDSRVSSAKLNNFSRLEPTLNLLGVQFDQNVAHGIITEKPGVATKLLYQLYIALQKKKKSGLTGVEMQTMQRLTNLRLQNMKSDTFQERLRHMIPRQTDFNLMRITYRFQEKYKHVKEDLAHLHFEKLERFQKLKEEQRCFDIEKQYLNRRRQNEIMAKIQAAIIQIPKPASNRTLKALEAQKMMKKKKEAEDVADEIKKFEALIKKDLQAKESASKTSLDTAGQTTTDLLNTYSDDEYIKKIQKRLEEDAFAREQREKRRRKLLMDQLIAHEAQEEAYREEQLINRLMRQSQQERRIAVQLMHVRHEKEVLWQNRIFREKQHEERRLKDFQDALDREAALAKQAKIDFEEQFLKEKRFHDQIAVERAQARYEKHYSVCAEILDQIVDLSTKVADYRMLTNNLIPYKLMHDWKELFFNAKPIYEQASVKTLPANPSREQLTELEKRDLLDTNDYEEYKNMVGEWALPEEMVDNLPPSNNCILGHILHRLAEKSLPPRAESTTPELPSFAVKGCLLGKTLSGKTTILRSLQKDFPIQILSIDTLVQEAIQAFHDNEKVSEVLPIQKNDEEDALPVLQEEIKESQDPQHVFSAGPVSDEVLPETEGETMLSANADKTPKAEEVKSSDSFLKLTTRAQLGAKSEQLLKKGKSIPDVLLVDIIVNAINEIPVNQDCILDGFPMTLNQAQLLEEALTGCNRNLTEVERKKAQKSTLAIDPATSKEIPLPSPAFDFVILLDVSDTSSMSRMNDIIAEELSYKTAHEDISQRVAAENQDKDGDQNLRDQIQHRIIGFLDNWPLLEQWFSEPENILIKINAEIDKESLCEKVKEILTTEIAKKKNKVEKKLEEKEAEKKAAASLAELPLPTPPPAPPPEPEKEKEIHQSHVASKTPTAKGKPQSEAPHGKQESLQEGKGKKGETALKRKGSPKGKSSGGKVPVKKSPADSTDTSPVAIVPQPPKPGSEEWVYVNEPVPEEMPLFLVPYWELIENSYINTIKTVLRHLREDQHTVLAYLYEIRTSFQEFLKRPDHKQDFVAQWQADFNSLPDDLWDDEETKAELHQRVNDLRDRLWDICDARKEEAEQERLDIINESWLQDTLGMTMNHFFSLMQAELNRFQDTKRLLQDYYWGMESKIPVEDNKRFTRIPLVQLDSKDNSESQLRIPLVPRISISLETVTPKPKTKSVLKGKMDNSLENVESNFEADEKLVMDTWQQASLAVSHMVAAEIHQRLMEEEKENQPADPKEKSPQMGANKKVKKEPPKKKQEDKKPKGKSPPMAEATPVIVTTEEIAEIKRKNELRVKIKEEHLAALQFEEIATQFRLELIKTKALALLEDLVTKVVDVYKLMEKWLGERYLNEMASTEKLTDVARYHIETSTKIQNELYLSQEDFFINGNIKVFPDPPPSIRPPPVEKEEDGTLTIEQLDSLRDQFLDMAPKG</original>
    <variation>MPSQIGDRKWLHGLQAALQNFLKGYPAIVRQLHSAGRGKSDTSQKKPKELLESLLQADIVKFAHFLLDVMNVLSILSCVNKNRNSSIADIFATLESMLEMLQMYQTRLGPKERMVDSATHFHGNCLRGKENISAVRNIVLTHLIKRLQGCFRDASQNVVRATVIGSFKLWPTKINQEFGEKEVSILTAHYEPVLEAANVKLSEVDTEWSMLKLEIYARFQNIRKLTWDFVNSIYLHKYPNILTLVDLVLTLPASSAEAEHGFSQMKWTKSHMHAKIKAES</variation>
    <location>
        <begin position="1"/>
        <end position="1483"/>
    </location>
</feature>
<feature type="splice variant" id="VSP_027522" description="In isoform 3." evidence="12 13">
    <original>NMVGEW</original>
    <variation>VPTDMK</variation>
    <location>
        <begin position="509"/>
        <end position="514"/>
    </location>
</feature>
<feature type="splice variant" id="VSP_027523" description="In isoform 3." evidence="12 13">
    <location>
        <begin position="515"/>
        <end position="1822"/>
    </location>
</feature>
<feature type="splice variant" id="VSP_027524" description="In isoform 2." evidence="11">
    <location>
        <begin position="655"/>
        <end position="659"/>
    </location>
</feature>
<feature type="splice variant" id="VSP_027525" description="In isoform 2." evidence="11">
    <original>DIKIILQRSEHVQGSDGERSPSRHTEEKK</original>
    <variation>VHIIYVVEMIVCAKGWAPLPSGKQCARWRN</variation>
    <location>
        <begin position="1794"/>
        <end position="1822"/>
    </location>
</feature>
<feature type="sequence variant" id="VAR_034766" description="In dbSNP:rs6897513." evidence="6">
    <original>N</original>
    <variation>H</variation>
    <location>
        <position position="71"/>
    </location>
</feature>
<feature type="sequence variant" id="VAR_034767" description="In dbSNP:rs34307272.">
    <original>G</original>
    <variation>S</variation>
    <location>
        <position position="74"/>
    </location>
</feature>
<feature type="sequence variant" id="VAR_083842" description="In SPGF43; loss of protein expression; changed sperm axoneme assembly." evidence="8">
    <location>
        <begin position="304"/>
        <end position="1822"/>
    </location>
</feature>
<feature type="sequence variant" id="VAR_034768" description="In dbSNP:rs16902381.">
    <original>R</original>
    <variation>K</variation>
    <location>
        <position position="366"/>
    </location>
</feature>
<feature type="sequence variant" id="VAR_034769" description="In dbSNP:rs34852821.">
    <original>R</original>
    <variation>Q</variation>
    <location>
        <position position="447"/>
    </location>
</feature>
<feature type="sequence variant" id="VAR_034770" description="In dbSNP:rs34708521." evidence="6">
    <original>D</original>
    <variation>N</variation>
    <location>
        <position position="500"/>
    </location>
</feature>
<feature type="sequence variant" id="VAR_034771" description="In dbSNP:rs7710284.">
    <original>N</original>
    <variation>K</variation>
    <location>
        <position position="616"/>
    </location>
</feature>
<feature type="sequence variant" id="VAR_034772" description="In dbSNP:rs12332369.">
    <original>E</original>
    <variation>G</variation>
    <location>
        <position position="655"/>
    </location>
</feature>
<feature type="sequence variant" id="VAR_051376" description="In dbSNP:rs13170082." evidence="5">
    <original>A</original>
    <variation>V</variation>
    <location>
        <position position="904"/>
    </location>
</feature>
<feature type="sequence variant" id="VAR_051377" description="In dbSNP:rs13170390." evidence="5">
    <original>A</original>
    <variation>P</variation>
    <location>
        <position position="934"/>
    </location>
</feature>
<feature type="sequence variant" id="VAR_083843" description="In SPGF43; loss of protein expression; changed sperm axoneme assembly." evidence="9">
    <location>
        <begin position="1368"/>
        <end position="1822"/>
    </location>
</feature>
<feature type="sequence variant" id="VAR_034773" description="In dbSNP:rs2277044.">
    <original>K</original>
    <variation>N</variation>
    <location>
        <position position="1482"/>
    </location>
</feature>
<feature type="sequence conflict" description="In Ref. 1; BAB15563." evidence="14" ref="1">
    <original>D</original>
    <variation>G</variation>
    <location>
        <position position="1698"/>
    </location>
</feature>
<proteinExistence type="evidence at protein level"/>
<dbReference type="EMBL" id="AK026817">
    <property type="protein sequence ID" value="BAB15563.1"/>
    <property type="molecule type" value="mRNA"/>
</dbReference>
<dbReference type="EMBL" id="AK027230">
    <property type="protein sequence ID" value="BAB15700.1"/>
    <property type="status" value="ALT_INIT"/>
    <property type="molecule type" value="mRNA"/>
</dbReference>
<dbReference type="EMBL" id="AK058124">
    <property type="protein sequence ID" value="BAB71674.1"/>
    <property type="molecule type" value="mRNA"/>
</dbReference>
<dbReference type="EMBL" id="BC110984">
    <property type="protein sequence ID" value="AAI10985.1"/>
    <property type="molecule type" value="mRNA"/>
</dbReference>
<dbReference type="EMBL" id="AB051557">
    <property type="protein sequence ID" value="BAB21861.1"/>
    <property type="molecule type" value="mRNA"/>
</dbReference>
<dbReference type="CCDS" id="CCDS3910.1">
    <molecule id="Q9C093-3"/>
</dbReference>
<dbReference type="CCDS" id="CCDS43309.1">
    <molecule id="Q9C093-1"/>
</dbReference>
<dbReference type="RefSeq" id="NP_079143.3">
    <molecule id="Q9C093-1"/>
    <property type="nucleotide sequence ID" value="NM_024867.3"/>
</dbReference>
<dbReference type="RefSeq" id="NP_653323.1">
    <molecule id="Q9C093-3"/>
    <property type="nucleotide sequence ID" value="NM_144722.4"/>
</dbReference>
<dbReference type="RefSeq" id="XP_005248434.1">
    <molecule id="Q9C093-2"/>
    <property type="nucleotide sequence ID" value="XM_005248377.5"/>
</dbReference>
<dbReference type="SMR" id="Q9C093"/>
<dbReference type="BioGRID" id="123002">
    <property type="interactions" value="13"/>
</dbReference>
<dbReference type="CORUM" id="Q9C093"/>
<dbReference type="FunCoup" id="Q9C093">
    <property type="interactions" value="118"/>
</dbReference>
<dbReference type="IntAct" id="Q9C093">
    <property type="interactions" value="10"/>
</dbReference>
<dbReference type="STRING" id="9606.ENSP00000348314"/>
<dbReference type="CarbonylDB" id="Q9C093"/>
<dbReference type="GlyGen" id="Q9C093">
    <property type="glycosylation" value="2 sites, 1 O-linked glycan (1 site)"/>
</dbReference>
<dbReference type="iPTMnet" id="Q9C093"/>
<dbReference type="PhosphoSitePlus" id="Q9C093"/>
<dbReference type="BioMuta" id="SPEF2"/>
<dbReference type="DMDM" id="156630941"/>
<dbReference type="jPOST" id="Q9C093"/>
<dbReference type="MassIVE" id="Q9C093"/>
<dbReference type="PaxDb" id="9606-ENSP00000348314"/>
<dbReference type="PeptideAtlas" id="Q9C093"/>
<dbReference type="ProteomicsDB" id="79968">
    <molecule id="Q9C093-1"/>
</dbReference>
<dbReference type="ProteomicsDB" id="79969">
    <molecule id="Q9C093-2"/>
</dbReference>
<dbReference type="ProteomicsDB" id="79970">
    <molecule id="Q9C093-3"/>
</dbReference>
<dbReference type="ProteomicsDB" id="79971">
    <molecule id="Q9C093-4"/>
</dbReference>
<dbReference type="Antibodypedia" id="22874">
    <property type="antibodies" value="49 antibodies from 11 providers"/>
</dbReference>
<dbReference type="DNASU" id="79925"/>
<dbReference type="Ensembl" id="ENST00000282469.10">
    <molecule id="Q9C093-3"/>
    <property type="protein sequence ID" value="ENSP00000282469.6"/>
    <property type="gene ID" value="ENSG00000152582.14"/>
</dbReference>
<dbReference type="Ensembl" id="ENST00000356031.8">
    <molecule id="Q9C093-1"/>
    <property type="protein sequence ID" value="ENSP00000348314.3"/>
    <property type="gene ID" value="ENSG00000152582.14"/>
</dbReference>
<dbReference type="Ensembl" id="ENST00000440995.6">
    <molecule id="Q9C093-2"/>
    <property type="protein sequence ID" value="ENSP00000412125.2"/>
    <property type="gene ID" value="ENSG00000152582.14"/>
</dbReference>
<dbReference type="GeneID" id="79925"/>
<dbReference type="KEGG" id="hsa:79925"/>
<dbReference type="MANE-Select" id="ENST00000356031.8">
    <property type="protein sequence ID" value="ENSP00000348314.3"/>
    <property type="RefSeq nucleotide sequence ID" value="NM_024867.4"/>
    <property type="RefSeq protein sequence ID" value="NP_079143.3"/>
</dbReference>
<dbReference type="UCSC" id="uc003jjn.2">
    <molecule id="Q9C093-1"/>
    <property type="organism name" value="human"/>
</dbReference>
<dbReference type="AGR" id="HGNC:26293"/>
<dbReference type="CTD" id="79925"/>
<dbReference type="DisGeNET" id="79925"/>
<dbReference type="GeneCards" id="SPEF2"/>
<dbReference type="HGNC" id="HGNC:26293">
    <property type="gene designation" value="SPEF2"/>
</dbReference>
<dbReference type="HPA" id="ENSG00000152582">
    <property type="expression patterns" value="Low tissue specificity"/>
</dbReference>
<dbReference type="MalaCards" id="SPEF2"/>
<dbReference type="MIM" id="610172">
    <property type="type" value="gene"/>
</dbReference>
<dbReference type="MIM" id="618751">
    <property type="type" value="phenotype"/>
</dbReference>
<dbReference type="neXtProt" id="NX_Q9C093"/>
<dbReference type="OpenTargets" id="ENSG00000152582"/>
<dbReference type="Orphanet" id="276234">
    <property type="disease" value="Non-syndromic male infertility due to sperm motility disorder"/>
</dbReference>
<dbReference type="Orphanet" id="244">
    <property type="disease" value="Primary ciliary dyskinesia"/>
</dbReference>
<dbReference type="PharmGKB" id="PA162404451"/>
<dbReference type="VEuPathDB" id="HostDB:ENSG00000152582"/>
<dbReference type="eggNOG" id="ENOG502QR7Y">
    <property type="taxonomic scope" value="Eukaryota"/>
</dbReference>
<dbReference type="GeneTree" id="ENSGT00390000008160"/>
<dbReference type="HOGENOM" id="CLU_015066_0_0_1"/>
<dbReference type="InParanoid" id="Q9C093"/>
<dbReference type="OMA" id="IMETKQQ"/>
<dbReference type="OrthoDB" id="62528at2759"/>
<dbReference type="PAN-GO" id="Q9C093">
    <property type="GO annotations" value="3 GO annotations based on evolutionary models"/>
</dbReference>
<dbReference type="PhylomeDB" id="Q9C093"/>
<dbReference type="TreeFam" id="TF329522"/>
<dbReference type="PathwayCommons" id="Q9C093"/>
<dbReference type="SignaLink" id="Q9C093"/>
<dbReference type="BioGRID-ORCS" id="79925">
    <property type="hits" value="20 hits in 1140 CRISPR screens"/>
</dbReference>
<dbReference type="ChiTaRS" id="SPEF2">
    <property type="organism name" value="human"/>
</dbReference>
<dbReference type="GeneWiki" id="SPEF2"/>
<dbReference type="GenomeRNAi" id="79925"/>
<dbReference type="Pharos" id="Q9C093">
    <property type="development level" value="Tdark"/>
</dbReference>
<dbReference type="PRO" id="PR:Q9C093"/>
<dbReference type="Proteomes" id="UP000005640">
    <property type="component" value="Chromosome 5"/>
</dbReference>
<dbReference type="RNAct" id="Q9C093">
    <property type="molecule type" value="protein"/>
</dbReference>
<dbReference type="Bgee" id="ENSG00000152582">
    <property type="expression patterns" value="Expressed in right uterine tube and 116 other cell types or tissues"/>
</dbReference>
<dbReference type="ExpressionAtlas" id="Q9C093">
    <property type="expression patterns" value="baseline and differential"/>
</dbReference>
<dbReference type="GO" id="GO:0005929">
    <property type="term" value="C:cilium"/>
    <property type="evidence" value="ECO:0000314"/>
    <property type="project" value="HPA"/>
</dbReference>
<dbReference type="GO" id="GO:0005737">
    <property type="term" value="C:cytoplasm"/>
    <property type="evidence" value="ECO:0000250"/>
    <property type="project" value="UniProtKB"/>
</dbReference>
<dbReference type="GO" id="GO:0005829">
    <property type="term" value="C:cytosol"/>
    <property type="evidence" value="ECO:0000314"/>
    <property type="project" value="HPA"/>
</dbReference>
<dbReference type="GO" id="GO:0005576">
    <property type="term" value="C:extracellular region"/>
    <property type="evidence" value="ECO:0007669"/>
    <property type="project" value="GOC"/>
</dbReference>
<dbReference type="GO" id="GO:0005794">
    <property type="term" value="C:Golgi apparatus"/>
    <property type="evidence" value="ECO:0000250"/>
    <property type="project" value="UniProtKB"/>
</dbReference>
<dbReference type="GO" id="GO:0002177">
    <property type="term" value="C:manchette"/>
    <property type="evidence" value="ECO:0000250"/>
    <property type="project" value="UniProtKB"/>
</dbReference>
<dbReference type="GO" id="GO:0016604">
    <property type="term" value="C:nuclear body"/>
    <property type="evidence" value="ECO:0000314"/>
    <property type="project" value="HPA"/>
</dbReference>
<dbReference type="GO" id="GO:0036126">
    <property type="term" value="C:sperm flagellum"/>
    <property type="evidence" value="ECO:0000314"/>
    <property type="project" value="UniProtKB"/>
</dbReference>
<dbReference type="GO" id="GO:0097225">
    <property type="term" value="C:sperm midpiece"/>
    <property type="evidence" value="ECO:0000250"/>
    <property type="project" value="UniProtKB"/>
</dbReference>
<dbReference type="GO" id="GO:0048854">
    <property type="term" value="P:brain morphogenesis"/>
    <property type="evidence" value="ECO:0000250"/>
    <property type="project" value="UniProtKB"/>
</dbReference>
<dbReference type="GO" id="GO:0003351">
    <property type="term" value="P:epithelial cilium movement involved in extracellular fluid movement"/>
    <property type="evidence" value="ECO:0000250"/>
    <property type="project" value="UniProtKB"/>
</dbReference>
<dbReference type="GO" id="GO:0060541">
    <property type="term" value="P:respiratory system development"/>
    <property type="evidence" value="ECO:0000250"/>
    <property type="project" value="UniProtKB"/>
</dbReference>
<dbReference type="GO" id="GO:0048705">
    <property type="term" value="P:skeletal system morphogenesis"/>
    <property type="evidence" value="ECO:0000250"/>
    <property type="project" value="UniProtKB"/>
</dbReference>
<dbReference type="GO" id="GO:0007288">
    <property type="term" value="P:sperm axoneme assembly"/>
    <property type="evidence" value="ECO:0000315"/>
    <property type="project" value="UniProtKB"/>
</dbReference>
<dbReference type="GO" id="GO:0007283">
    <property type="term" value="P:spermatogenesis"/>
    <property type="evidence" value="ECO:0000250"/>
    <property type="project" value="UniProtKB"/>
</dbReference>
<dbReference type="Gene3D" id="1.10.418.10">
    <property type="entry name" value="Calponin-like domain"/>
    <property type="match status" value="1"/>
</dbReference>
<dbReference type="Gene3D" id="3.40.50.300">
    <property type="entry name" value="P-loop containing nucleotide triphosphate hydrolases"/>
    <property type="match status" value="1"/>
</dbReference>
<dbReference type="InterPro" id="IPR010441">
    <property type="entry name" value="CH_2"/>
</dbReference>
<dbReference type="InterPro" id="IPR001715">
    <property type="entry name" value="CH_dom"/>
</dbReference>
<dbReference type="InterPro" id="IPR036872">
    <property type="entry name" value="CH_dom_sf"/>
</dbReference>
<dbReference type="InterPro" id="IPR011992">
    <property type="entry name" value="EF-hand-dom_pair"/>
</dbReference>
<dbReference type="InterPro" id="IPR027417">
    <property type="entry name" value="P-loop_NTPase"/>
</dbReference>
<dbReference type="InterPro" id="IPR056199">
    <property type="entry name" value="SPEF2_C"/>
</dbReference>
<dbReference type="InterPro" id="IPR054517">
    <property type="entry name" value="SPEF2_D5"/>
</dbReference>
<dbReference type="InterPro" id="IPR052634">
    <property type="entry name" value="Sperm_flagellar-bone_growth"/>
</dbReference>
<dbReference type="PANTHER" id="PTHR14919">
    <property type="entry name" value="KPL2-RELATED"/>
    <property type="match status" value="1"/>
</dbReference>
<dbReference type="PANTHER" id="PTHR14919:SF0">
    <property type="entry name" value="SPERM FLAGELLAR PROTEIN 2"/>
    <property type="match status" value="1"/>
</dbReference>
<dbReference type="Pfam" id="PF00406">
    <property type="entry name" value="ADK"/>
    <property type="match status" value="1"/>
</dbReference>
<dbReference type="Pfam" id="PF06294">
    <property type="entry name" value="CH_2"/>
    <property type="match status" value="1"/>
</dbReference>
<dbReference type="Pfam" id="PF24082">
    <property type="entry name" value="SPEF2_C"/>
    <property type="match status" value="1"/>
</dbReference>
<dbReference type="Pfam" id="PF22946">
    <property type="entry name" value="SPEF2_D5"/>
    <property type="match status" value="1"/>
</dbReference>
<dbReference type="SUPFAM" id="SSF47473">
    <property type="entry name" value="EF-hand"/>
    <property type="match status" value="1"/>
</dbReference>
<dbReference type="SUPFAM" id="SSF52540">
    <property type="entry name" value="P-loop containing nucleoside triphosphate hydrolases"/>
    <property type="match status" value="1"/>
</dbReference>
<dbReference type="PROSITE" id="PS50021">
    <property type="entry name" value="CH"/>
    <property type="match status" value="1"/>
</dbReference>
<comment type="function">
    <text evidence="1 8 9 10">Required for correct axoneme development in spermatozoa. Important for normal development of the manchette and sperm head morphology. Essential for male fertility. Plays a role in localization of the intraflagellar transport protein IFT20 to the manchette, suggesting function as an adapter for dynein-mediated protein transport during spermatogenesis (PubMed:31048344, PubMed:31151990, PubMed:31278745). Also plays a role in bone growth where it seems to be required for normal osteoblast differentiation (By similarity).</text>
</comment>
<comment type="subunit">
    <text evidence="1 7">Interacts (via C-terminus) with IFT20 (PubMed:19889948). Interacts with DYNC1I2 (By similarity).</text>
</comment>
<comment type="subcellular location">
    <subcellularLocation>
        <location evidence="8 9 10">Cell projection</location>
        <location evidence="8 9 10">Cilium</location>
        <location evidence="8 9 10">Flagellum</location>
    </subcellularLocation>
    <subcellularLocation>
        <location evidence="1">Cytoplasm</location>
    </subcellularLocation>
    <subcellularLocation>
        <location evidence="1">Golgi apparatus</location>
    </subcellularLocation>
    <text evidence="1">Shows dynamic localization in developing spermatozoa. Localizes to the manchette in step 10-12 elongating spermatids. Detected in the basal body and neck area of step 13-14 spermatids. Localizes to the midpiece of the sperm tail in step 15-16 spermatids. During the epididymal transport of spermatozoa, expression in the sperm tail reduces and becomes concentrated at the distal part of the midpiece. Detected in the Golgi apparatus of late spermatocytes and round spermatids. Detected in the cytoplasm of Sertoli cells.</text>
</comment>
<comment type="alternative products">
    <event type="alternative splicing"/>
    <isoform>
        <id>Q9C093-1</id>
        <name>1</name>
        <sequence type="displayed"/>
    </isoform>
    <isoform>
        <id>Q9C093-2</id>
        <name>2</name>
        <sequence type="described" ref="VSP_027524 VSP_027525"/>
    </isoform>
    <isoform>
        <id>Q9C093-3</id>
        <name>3</name>
        <sequence type="described" ref="VSP_027522 VSP_027523"/>
    </isoform>
    <isoform>
        <id>Q9C093-4</id>
        <name>4</name>
        <sequence type="described" ref="VSP_027521"/>
    </isoform>
</comment>
<comment type="disease" evidence="8 9 10">
    <disease id="DI-05740">
        <name>Spermatogenic failure 43</name>
        <acronym>SPGF43</acronym>
        <description>An autosomal recessive infertility disorder characterized by asthenospermia due to multiple morphologic abnormalities of sperm flagella, including short, absent, coiled, and bent flagella.</description>
        <dbReference type="MIM" id="618751"/>
    </disease>
    <text>The disease is caused by variants affecting the gene represented in this entry.</text>
</comment>
<comment type="miscellaneous">
    <molecule>Isoform 4</molecule>
    <text evidence="14">May be produced at very low levels due to a premature stop codon in the mRNA, leading to nonsense-mediated mRNA decay.</text>
</comment>
<comment type="sequence caution" evidence="14">
    <conflict type="erroneous initiation">
        <sequence resource="EMBL-CDS" id="BAB15700"/>
    </conflict>
    <text>Truncated N-terminus.</text>
</comment>
<reference key="1">
    <citation type="journal article" date="2004" name="Nat. Genet.">
        <title>Complete sequencing and characterization of 21,243 full-length human cDNAs.</title>
        <authorList>
            <person name="Ota T."/>
            <person name="Suzuki Y."/>
            <person name="Nishikawa T."/>
            <person name="Otsuki T."/>
            <person name="Sugiyama T."/>
            <person name="Irie R."/>
            <person name="Wakamatsu A."/>
            <person name="Hayashi K."/>
            <person name="Sato H."/>
            <person name="Nagai K."/>
            <person name="Kimura K."/>
            <person name="Makita H."/>
            <person name="Sekine M."/>
            <person name="Obayashi M."/>
            <person name="Nishi T."/>
            <person name="Shibahara T."/>
            <person name="Tanaka T."/>
            <person name="Ishii S."/>
            <person name="Yamamoto J."/>
            <person name="Saito K."/>
            <person name="Kawai Y."/>
            <person name="Isono Y."/>
            <person name="Nakamura Y."/>
            <person name="Nagahari K."/>
            <person name="Murakami K."/>
            <person name="Yasuda T."/>
            <person name="Iwayanagi T."/>
            <person name="Wagatsuma M."/>
            <person name="Shiratori A."/>
            <person name="Sudo H."/>
            <person name="Hosoiri T."/>
            <person name="Kaku Y."/>
            <person name="Kodaira H."/>
            <person name="Kondo H."/>
            <person name="Sugawara M."/>
            <person name="Takahashi M."/>
            <person name="Kanda K."/>
            <person name="Yokoi T."/>
            <person name="Furuya T."/>
            <person name="Kikkawa E."/>
            <person name="Omura Y."/>
            <person name="Abe K."/>
            <person name="Kamihara K."/>
            <person name="Katsuta N."/>
            <person name="Sato K."/>
            <person name="Tanikawa M."/>
            <person name="Yamazaki M."/>
            <person name="Ninomiya K."/>
            <person name="Ishibashi T."/>
            <person name="Yamashita H."/>
            <person name="Murakawa K."/>
            <person name="Fujimori K."/>
            <person name="Tanai H."/>
            <person name="Kimata M."/>
            <person name="Watanabe M."/>
            <person name="Hiraoka S."/>
            <person name="Chiba Y."/>
            <person name="Ishida S."/>
            <person name="Ono Y."/>
            <person name="Takiguchi S."/>
            <person name="Watanabe S."/>
            <person name="Yosida M."/>
            <person name="Hotuta T."/>
            <person name="Kusano J."/>
            <person name="Kanehori K."/>
            <person name="Takahashi-Fujii A."/>
            <person name="Hara H."/>
            <person name="Tanase T.-O."/>
            <person name="Nomura Y."/>
            <person name="Togiya S."/>
            <person name="Komai F."/>
            <person name="Hara R."/>
            <person name="Takeuchi K."/>
            <person name="Arita M."/>
            <person name="Imose N."/>
            <person name="Musashino K."/>
            <person name="Yuuki H."/>
            <person name="Oshima A."/>
            <person name="Sasaki N."/>
            <person name="Aotsuka S."/>
            <person name="Yoshikawa Y."/>
            <person name="Matsunawa H."/>
            <person name="Ichihara T."/>
            <person name="Shiohata N."/>
            <person name="Sano S."/>
            <person name="Moriya S."/>
            <person name="Momiyama H."/>
            <person name="Satoh N."/>
            <person name="Takami S."/>
            <person name="Terashima Y."/>
            <person name="Suzuki O."/>
            <person name="Nakagawa S."/>
            <person name="Senoh A."/>
            <person name="Mizoguchi H."/>
            <person name="Goto Y."/>
            <person name="Shimizu F."/>
            <person name="Wakebe H."/>
            <person name="Hishigaki H."/>
            <person name="Watanabe T."/>
            <person name="Sugiyama A."/>
            <person name="Takemoto M."/>
            <person name="Kawakami B."/>
            <person name="Yamazaki M."/>
            <person name="Watanabe K."/>
            <person name="Kumagai A."/>
            <person name="Itakura S."/>
            <person name="Fukuzumi Y."/>
            <person name="Fujimori Y."/>
            <person name="Komiyama M."/>
            <person name="Tashiro H."/>
            <person name="Tanigami A."/>
            <person name="Fujiwara T."/>
            <person name="Ono T."/>
            <person name="Yamada K."/>
            <person name="Fujii Y."/>
            <person name="Ozaki K."/>
            <person name="Hirao M."/>
            <person name="Ohmori Y."/>
            <person name="Kawabata A."/>
            <person name="Hikiji T."/>
            <person name="Kobatake N."/>
            <person name="Inagaki H."/>
            <person name="Ikema Y."/>
            <person name="Okamoto S."/>
            <person name="Okitani R."/>
            <person name="Kawakami T."/>
            <person name="Noguchi S."/>
            <person name="Itoh T."/>
            <person name="Shigeta K."/>
            <person name="Senba T."/>
            <person name="Matsumura K."/>
            <person name="Nakajima Y."/>
            <person name="Mizuno T."/>
            <person name="Morinaga M."/>
            <person name="Sasaki M."/>
            <person name="Togashi T."/>
            <person name="Oyama M."/>
            <person name="Hata H."/>
            <person name="Watanabe M."/>
            <person name="Komatsu T."/>
            <person name="Mizushima-Sugano J."/>
            <person name="Satoh T."/>
            <person name="Shirai Y."/>
            <person name="Takahashi Y."/>
            <person name="Nakagawa K."/>
            <person name="Okumura K."/>
            <person name="Nagase T."/>
            <person name="Nomura N."/>
            <person name="Kikuchi H."/>
            <person name="Masuho Y."/>
            <person name="Yamashita R."/>
            <person name="Nakai K."/>
            <person name="Yada T."/>
            <person name="Nakamura Y."/>
            <person name="Ohara O."/>
            <person name="Isogai T."/>
            <person name="Sugano S."/>
        </authorList>
    </citation>
    <scope>NUCLEOTIDE SEQUENCE [LARGE SCALE MRNA] (ISOFORMS 3 AND 4)</scope>
    <scope>NUCLEOTIDE SEQUENCE [LARGE SCALE MRNA] OF 1149-1822 (ISOFORM 1)</scope>
    <source>
        <tissue>Lung</tissue>
        <tissue>Testis</tissue>
    </source>
</reference>
<reference key="2">
    <citation type="journal article" date="2004" name="Genome Res.">
        <title>The status, quality, and expansion of the NIH full-length cDNA project: the Mammalian Gene Collection (MGC).</title>
        <authorList>
            <consortium name="The MGC Project Team"/>
        </authorList>
    </citation>
    <scope>NUCLEOTIDE SEQUENCE [LARGE SCALE MRNA] (ISOFORM 3)</scope>
    <scope>VARIANTS HIS-71 AND ASN-500</scope>
    <source>
        <tissue>Brain</tissue>
    </source>
</reference>
<reference key="3">
    <citation type="journal article" date="2000" name="DNA Res.">
        <title>Prediction of the coding sequences of unidentified human genes. XIX. The complete sequences of 100 new cDNA clones from brain which code for large proteins in vitro.</title>
        <authorList>
            <person name="Nagase T."/>
            <person name="Kikuno R."/>
            <person name="Hattori A."/>
            <person name="Kondo Y."/>
            <person name="Okumura K."/>
            <person name="Ohara O."/>
        </authorList>
    </citation>
    <scope>NUCLEOTIDE SEQUENCE [LARGE SCALE MRNA] OF 512-1822 (ISOFORM 2)</scope>
    <scope>VARIANTS VAL-904 AND PRO-934</scope>
    <source>
        <tissue>Brain</tissue>
    </source>
</reference>
<reference key="4">
    <citation type="journal article" date="2010" name="Biol. Reprod.">
        <title>Expression of SPEF2 during mouse spermatogenesis and identification of IFT20 as an interacting protein.</title>
        <authorList>
            <person name="Sironen A."/>
            <person name="Hansen J."/>
            <person name="Thomsen B."/>
            <person name="Andersson M."/>
            <person name="Vilkki J."/>
            <person name="Toppari J."/>
            <person name="Kotaja N."/>
        </authorList>
    </citation>
    <scope>INTERACTION WITH IFT20</scope>
</reference>
<reference key="5">
    <citation type="journal article" date="2019" name="Clin. Genet.">
        <title>Biallelic mutations in Sperm flagellum 2 cause human multiple morphological abnormalities of the sperm flagella (MMAF) phenotype.</title>
        <authorList>
            <person name="Sha Y."/>
            <person name="Liu W."/>
            <person name="Wei X."/>
            <person name="Zhu X."/>
            <person name="Luo X."/>
            <person name="Liang L."/>
            <person name="Guo T."/>
        </authorList>
    </citation>
    <scope>INVOLVEMENT IN SPGF43</scope>
    <scope>FUNCTION</scope>
    <scope>SUBCELLULAR LOCATION</scope>
</reference>
<reference key="6">
    <citation type="journal article" date="2019" name="J. Med. Genet.">
        <title>Loss-of-function mutations in SPEF2 cause multiple morphological abnormalities of the sperm flagella (MMAF).</title>
        <authorList>
            <person name="Liu W."/>
            <person name="Sha Y."/>
            <person name="Li Y."/>
            <person name="Mei L."/>
            <person name="Lin S."/>
            <person name="Huang X."/>
            <person name="Lu J."/>
            <person name="Ding L."/>
            <person name="Kong S."/>
            <person name="Lu Z."/>
        </authorList>
    </citation>
    <scope>VARIANT SPGF43 1368-GLU--LYS-1822 DEL</scope>
    <scope>CHARACTERIZATION OF VARIANT SPGF43 1368-GLU--LYS-1822 DEL</scope>
    <scope>FUNCTION</scope>
    <scope>SUBCELLULAR LOCATION</scope>
</reference>
<reference key="7">
    <citation type="journal article" date="2020" name="J. Med. Genet.">
        <title>Homozygous mutations in SPEF2 induce multiple morphological abnormalities of the sperm flagella and male infertility.</title>
        <authorList>
            <person name="Liu C."/>
            <person name="Lv M."/>
            <person name="He X."/>
            <person name="Zhu Y."/>
            <person name="Amiri-Yekta A."/>
            <person name="Li W."/>
            <person name="Wu H."/>
            <person name="Kherraf Z.E."/>
            <person name="Liu W."/>
            <person name="Zhang J."/>
            <person name="Tan Q."/>
            <person name="Tang S."/>
            <person name="Zhu Y.J."/>
            <person name="Zhong Y."/>
            <person name="Li C."/>
            <person name="Tian S."/>
            <person name="Zhang Z."/>
            <person name="Jin L."/>
            <person name="Ray P."/>
            <person name="Zhang F."/>
            <person name="Cao Y."/>
        </authorList>
    </citation>
    <scope>VARIANT SPGF43 304-ARG--LYS-1822 DEL</scope>
    <scope>CHARACTERIZATION OF VARIANT SPGF43 304-ARG--LYS-1822 DEL</scope>
    <scope>FUNCTION</scope>
    <scope>SUBCELLULAR LOCATION</scope>
</reference>
<evidence type="ECO:0000250" key="1">
    <source>
        <dbReference type="UniProtKB" id="Q8C9J3"/>
    </source>
</evidence>
<evidence type="ECO:0000255" key="2"/>
<evidence type="ECO:0000255" key="3">
    <source>
        <dbReference type="PROSITE-ProRule" id="PRU00044"/>
    </source>
</evidence>
<evidence type="ECO:0000256" key="4">
    <source>
        <dbReference type="SAM" id="MobiDB-lite"/>
    </source>
</evidence>
<evidence type="ECO:0000269" key="5">
    <source>
    </source>
</evidence>
<evidence type="ECO:0000269" key="6">
    <source>
    </source>
</evidence>
<evidence type="ECO:0000269" key="7">
    <source>
    </source>
</evidence>
<evidence type="ECO:0000269" key="8">
    <source>
    </source>
</evidence>
<evidence type="ECO:0000269" key="9">
    <source>
    </source>
</evidence>
<evidence type="ECO:0000269" key="10">
    <source>
    </source>
</evidence>
<evidence type="ECO:0000303" key="11">
    <source>
    </source>
</evidence>
<evidence type="ECO:0000303" key="12">
    <source>
    </source>
</evidence>
<evidence type="ECO:0000303" key="13">
    <source>
    </source>
</evidence>
<evidence type="ECO:0000305" key="14"/>
<sequence>MSEILCQWLNKELKVSRTVSPKSFAKAFSSGYLLGEVLHKFELQDDFSEFLDSRVSSAKLNNFSRLEPTLNLLGVQFDQNVAHGIITEKPGVATKLLYQLYIALQKKKKSGLTGVEMQTMQRLTNLRLQNMKSDTFQERLRHMIPRQTDFNLMRITYRFQEKYKHVKEDLAHLHFEKLERFQKLKEEQRCFDIEKQYLNRRRQNEIMAKIQAAIIQIPKPASNRTLKALEAQKMMKKKKEAEDVADEIKKFEALIKKDLQAKESASKTSLDTAGQTTTDLLNTYSDDEYIKKIQKRLEEDAFAREQREKRRRKLLMDQLIAHEAQEEAYREEQLINRLMRQSQQERRIAVQLMHVRHEKEVLWQNRIFREKQHEERRLKDFQDALDREAALAKQAKIDFEEQFLKEKRFHDQIAVERAQARYEKHYSVCAEILDQIVDLSTKVADYRMLTNNLIPYKLMHDWKELFFNAKPIYEQASVKTLPANPSREQLTELEKRDLLDTNDYEEYKNMVGEWALPEEMVDNLPPSNNCILGHILHRLAEKSLPPRAESTTPELPSFAVKGCLLGKTLSGKTTILRSLQKDFPIQILSIDTLVQEAIQAFHDNEKVSEVLPIQKNDEEDALPVLQEEIKESQDPQHVFSAGPVSDEVLPETEGETMLSANADKTPKAEEVKSSDSFLKLTTRAQLGAKSEQLLKKGKSIPDVLLVDIIVNAINEIPVNQDCILDGFPMTLNQAQLLEEALTGCNRNLTEVERKKAQKSTLAIDPATSKEIPLPSPAFDFVILLDVSDTSSMSRMNDIIAEELSYKTAHEDISQRVAAENQDKDGDQNLRDQIQHRIIGFLDNWPLLEQWFSEPENILIKINAEIDKESLCEKVKEILTTEIAKKKNKVEKKLEEKEAEKKAAASLAELPLPTPPPAPPPEPEKEKEIHQSHVASKTPTAKGKPQSEAPHGKQESLQEGKGKKGETALKRKGSPKGKSSGGKVPVKKSPADSTDTSPVAIVPQPPKPGSEEWVYVNEPVPEEMPLFLVPYWELIENSYINTIKTVLRHLREDQHTVLAYLYEIRTSFQEFLKRPDHKQDFVAQWQADFNSLPDDLWDDEETKAELHQRVNDLRDRLWDICDARKEEAEQERLDIINESWLQDTLGMTMNHFFSLMQAELNRFQDTKRLLQDYYWGMESKIPVEDNKRFTRIPLVQLDSKDNSESQLRIPLVPRISISLETVTPKPKTKSVLKGKMDNSLENVESNFEADEKLVMDTWQQASLAVSHMVAAEIHQRLMEEEKENQPADPKEKSPQMGANKKVKKEPPKKKQEDKKPKGKSPPMAEATPVIVTTEEIAEIKRKNELRVKIKEEHLAALQFEEIATQFRLELIKTKALALLEDLVTKVVDVYKLMEKWLGERYLNEMASTEKLTDVARYHIETSTKIQNELYLSQEDFFINGNIKVFPDPPPSIRPPPVEKEEDGTLTIEQLDSLRDQFLDMAPKGIIGNKAFTDILIDLVTLNLGTNNFPSNWMHLTQPELQELTSLLTVNSEFVDWRKFLLVTSMPWPIPLEEELLETLQKFKAVDKEQLGTITFEQYMQAGLWFTGDEDIKIPENPLEPLPFNRQEHLIEFFFRLFADYEKDPPQLDYTQMLLYFACHPDTVEGVYRALSVAVGTHVFQQVKASIPSAEKTSSTDAGPAEEFPEPEENAAREERKLKDDTEKREQKDEEIPENANNEKMSMETLLKVFKGGSEAQDSNRFASHLKIENIYAEGFIKTFQDLGAKNLEPIEVAVLLKHPFIQDLISNYSDYKFPDIKIILQRSEHVQGSDGERSPSRHTEEKK</sequence>
<protein>
    <recommendedName>
        <fullName>Sperm flagellar protein 2</fullName>
    </recommendedName>
    <alternativeName>
        <fullName>Protein KPL2</fullName>
    </alternativeName>
</protein>
<organism>
    <name type="scientific">Homo sapiens</name>
    <name type="common">Human</name>
    <dbReference type="NCBI Taxonomy" id="9606"/>
    <lineage>
        <taxon>Eukaryota</taxon>
        <taxon>Metazoa</taxon>
        <taxon>Chordata</taxon>
        <taxon>Craniata</taxon>
        <taxon>Vertebrata</taxon>
        <taxon>Euteleostomi</taxon>
        <taxon>Mammalia</taxon>
        <taxon>Eutheria</taxon>
        <taxon>Euarchontoglires</taxon>
        <taxon>Primates</taxon>
        <taxon>Haplorrhini</taxon>
        <taxon>Catarrhini</taxon>
        <taxon>Hominidae</taxon>
        <taxon>Homo</taxon>
    </lineage>
</organism>
<name>SPEF2_HUMAN</name>
<gene>
    <name type="primary">SPEF2</name>
    <name type="synonym">KIAA1770</name>
    <name type="synonym">KPL2</name>
</gene>